<accession>Q3Z964</accession>
<sequence length="172" mass="17860">MLAKVERIDPSELELNDKLIFINRVTKVVKGGKRMGFAALVVTGDGKNHVGIGVGKAKEVPSAISKASANAKRNLSRILLNGTTVPHEIVFKYGAAQVLLKPAAPGTGIIAGGSVRAVLESTGIKDILTKSMGCSNKANVAKATLGGLTAMRDPKTTVTKRRSSLKEEAAGG</sequence>
<comment type="function">
    <text evidence="1">With S4 and S12 plays an important role in translational accuracy.</text>
</comment>
<comment type="function">
    <text evidence="1">Located at the back of the 30S subunit body where it stabilizes the conformation of the head with respect to the body.</text>
</comment>
<comment type="subunit">
    <text evidence="1">Part of the 30S ribosomal subunit. Contacts proteins S4 and S8.</text>
</comment>
<comment type="domain">
    <text>The N-terminal domain interacts with the head of the 30S subunit; the C-terminal domain interacts with the body and contacts protein S4. The interaction surface between S4 and S5 is involved in control of translational fidelity.</text>
</comment>
<comment type="similarity">
    <text evidence="1">Belongs to the universal ribosomal protein uS5 family.</text>
</comment>
<dbReference type="EMBL" id="CP000027">
    <property type="protein sequence ID" value="AAW40275.1"/>
    <property type="molecule type" value="Genomic_DNA"/>
</dbReference>
<dbReference type="RefSeq" id="WP_010936268.1">
    <property type="nucleotide sequence ID" value="NC_002936.3"/>
</dbReference>
<dbReference type="SMR" id="Q3Z964"/>
<dbReference type="FunCoup" id="Q3Z964">
    <property type="interactions" value="372"/>
</dbReference>
<dbReference type="STRING" id="243164.DET0491"/>
<dbReference type="GeneID" id="3230239"/>
<dbReference type="KEGG" id="det:DET0491"/>
<dbReference type="eggNOG" id="COG0098">
    <property type="taxonomic scope" value="Bacteria"/>
</dbReference>
<dbReference type="HOGENOM" id="CLU_065898_2_2_0"/>
<dbReference type="InParanoid" id="Q3Z964"/>
<dbReference type="Proteomes" id="UP000008289">
    <property type="component" value="Chromosome"/>
</dbReference>
<dbReference type="GO" id="GO:0015935">
    <property type="term" value="C:small ribosomal subunit"/>
    <property type="evidence" value="ECO:0007669"/>
    <property type="project" value="InterPro"/>
</dbReference>
<dbReference type="GO" id="GO:0019843">
    <property type="term" value="F:rRNA binding"/>
    <property type="evidence" value="ECO:0007669"/>
    <property type="project" value="UniProtKB-UniRule"/>
</dbReference>
<dbReference type="GO" id="GO:0003735">
    <property type="term" value="F:structural constituent of ribosome"/>
    <property type="evidence" value="ECO:0007669"/>
    <property type="project" value="InterPro"/>
</dbReference>
<dbReference type="GO" id="GO:0006412">
    <property type="term" value="P:translation"/>
    <property type="evidence" value="ECO:0007669"/>
    <property type="project" value="UniProtKB-UniRule"/>
</dbReference>
<dbReference type="FunFam" id="3.30.160.20:FF:000001">
    <property type="entry name" value="30S ribosomal protein S5"/>
    <property type="match status" value="1"/>
</dbReference>
<dbReference type="FunFam" id="3.30.230.10:FF:000002">
    <property type="entry name" value="30S ribosomal protein S5"/>
    <property type="match status" value="1"/>
</dbReference>
<dbReference type="Gene3D" id="3.30.160.20">
    <property type="match status" value="1"/>
</dbReference>
<dbReference type="Gene3D" id="3.30.230.10">
    <property type="match status" value="1"/>
</dbReference>
<dbReference type="HAMAP" id="MF_01307_B">
    <property type="entry name" value="Ribosomal_uS5_B"/>
    <property type="match status" value="1"/>
</dbReference>
<dbReference type="InterPro" id="IPR020568">
    <property type="entry name" value="Ribosomal_Su5_D2-typ_SF"/>
</dbReference>
<dbReference type="InterPro" id="IPR000851">
    <property type="entry name" value="Ribosomal_uS5"/>
</dbReference>
<dbReference type="InterPro" id="IPR005712">
    <property type="entry name" value="Ribosomal_uS5_bac-type"/>
</dbReference>
<dbReference type="InterPro" id="IPR005324">
    <property type="entry name" value="Ribosomal_uS5_C"/>
</dbReference>
<dbReference type="InterPro" id="IPR013810">
    <property type="entry name" value="Ribosomal_uS5_N"/>
</dbReference>
<dbReference type="InterPro" id="IPR014721">
    <property type="entry name" value="Ribsml_uS5_D2-typ_fold_subgr"/>
</dbReference>
<dbReference type="NCBIfam" id="TIGR01021">
    <property type="entry name" value="rpsE_bact"/>
    <property type="match status" value="1"/>
</dbReference>
<dbReference type="PANTHER" id="PTHR48277">
    <property type="entry name" value="MITOCHONDRIAL RIBOSOMAL PROTEIN S5"/>
    <property type="match status" value="1"/>
</dbReference>
<dbReference type="PANTHER" id="PTHR48277:SF1">
    <property type="entry name" value="MITOCHONDRIAL RIBOSOMAL PROTEIN S5"/>
    <property type="match status" value="1"/>
</dbReference>
<dbReference type="Pfam" id="PF00333">
    <property type="entry name" value="Ribosomal_S5"/>
    <property type="match status" value="1"/>
</dbReference>
<dbReference type="Pfam" id="PF03719">
    <property type="entry name" value="Ribosomal_S5_C"/>
    <property type="match status" value="1"/>
</dbReference>
<dbReference type="SUPFAM" id="SSF54768">
    <property type="entry name" value="dsRNA-binding domain-like"/>
    <property type="match status" value="1"/>
</dbReference>
<dbReference type="SUPFAM" id="SSF54211">
    <property type="entry name" value="Ribosomal protein S5 domain 2-like"/>
    <property type="match status" value="1"/>
</dbReference>
<dbReference type="PROSITE" id="PS50881">
    <property type="entry name" value="S5_DSRBD"/>
    <property type="match status" value="1"/>
</dbReference>
<proteinExistence type="inferred from homology"/>
<evidence type="ECO:0000255" key="1">
    <source>
        <dbReference type="HAMAP-Rule" id="MF_01307"/>
    </source>
</evidence>
<evidence type="ECO:0000305" key="2"/>
<reference key="1">
    <citation type="journal article" date="2005" name="Science">
        <title>Genome sequence of the PCE-dechlorinating bacterium Dehalococcoides ethenogenes.</title>
        <authorList>
            <person name="Seshadri R."/>
            <person name="Adrian L."/>
            <person name="Fouts D.E."/>
            <person name="Eisen J.A."/>
            <person name="Phillippy A.M."/>
            <person name="Methe B.A."/>
            <person name="Ward N.L."/>
            <person name="Nelson W.C."/>
            <person name="DeBoy R.T."/>
            <person name="Khouri H.M."/>
            <person name="Kolonay J.F."/>
            <person name="Dodson R.J."/>
            <person name="Daugherty S.C."/>
            <person name="Brinkac L.M."/>
            <person name="Sullivan S.A."/>
            <person name="Madupu R."/>
            <person name="Nelson K.E."/>
            <person name="Kang K.H."/>
            <person name="Impraim M."/>
            <person name="Tran K."/>
            <person name="Robinson J.M."/>
            <person name="Forberger H.A."/>
            <person name="Fraser C.M."/>
            <person name="Zinder S.H."/>
            <person name="Heidelberg J.F."/>
        </authorList>
    </citation>
    <scope>NUCLEOTIDE SEQUENCE [LARGE SCALE GENOMIC DNA]</scope>
    <source>
        <strain>ATCC BAA-2266 / KCTC 15142 / 195</strain>
    </source>
</reference>
<name>RS5_DEHM1</name>
<gene>
    <name evidence="1" type="primary">rpsE</name>
    <name type="ordered locus">DET0491</name>
</gene>
<organism>
    <name type="scientific">Dehalococcoides mccartyi (strain ATCC BAA-2266 / KCTC 15142 / 195)</name>
    <name type="common">Dehalococcoides ethenogenes (strain 195)</name>
    <dbReference type="NCBI Taxonomy" id="243164"/>
    <lineage>
        <taxon>Bacteria</taxon>
        <taxon>Bacillati</taxon>
        <taxon>Chloroflexota</taxon>
        <taxon>Dehalococcoidia</taxon>
        <taxon>Dehalococcoidales</taxon>
        <taxon>Dehalococcoidaceae</taxon>
        <taxon>Dehalococcoides</taxon>
    </lineage>
</organism>
<keyword id="KW-0687">Ribonucleoprotein</keyword>
<keyword id="KW-0689">Ribosomal protein</keyword>
<keyword id="KW-0694">RNA-binding</keyword>
<keyword id="KW-0699">rRNA-binding</keyword>
<feature type="chain" id="PRO_0000230343" description="Small ribosomal subunit protein uS5">
    <location>
        <begin position="1"/>
        <end position="172"/>
    </location>
</feature>
<feature type="domain" description="S5 DRBM" evidence="1">
    <location>
        <begin position="15"/>
        <end position="78"/>
    </location>
</feature>
<protein>
    <recommendedName>
        <fullName evidence="1">Small ribosomal subunit protein uS5</fullName>
    </recommendedName>
    <alternativeName>
        <fullName evidence="2">30S ribosomal protein S5</fullName>
    </alternativeName>
</protein>